<protein>
    <recommendedName>
        <fullName evidence="7">L-threonine kinase</fullName>
        <ecNumber evidence="4">2.7.1.177</ecNumber>
    </recommendedName>
    <alternativeName>
        <fullName>Propanediol utilization protein PduX</fullName>
    </alternativeName>
</protein>
<gene>
    <name evidence="6" type="primary">pduX</name>
    <name type="ordered locus">STM2058</name>
</gene>
<accession>Q9XDM4</accession>
<accession>H9L4E0</accession>
<accession>Q7BV72</accession>
<evidence type="ECO:0000255" key="1"/>
<evidence type="ECO:0000269" key="2">
    <source>
    </source>
</evidence>
<evidence type="ECO:0000269" key="3">
    <source>
    </source>
</evidence>
<evidence type="ECO:0000269" key="4">
    <source>
    </source>
</evidence>
<evidence type="ECO:0000269" key="5">
    <source>
    </source>
</evidence>
<evidence type="ECO:0000303" key="6">
    <source>
    </source>
</evidence>
<evidence type="ECO:0000303" key="7">
    <source>
    </source>
</evidence>
<evidence type="ECO:0000305" key="8"/>
<evidence type="ECO:0000305" key="9">
    <source>
    </source>
</evidence>
<evidence type="ECO:0000305" key="10">
    <source>
    </source>
</evidence>
<evidence type="ECO:0000305" key="11">
    <source>
    </source>
</evidence>
<evidence type="ECO:0000305" key="12">
    <source>
    </source>
</evidence>
<comment type="function">
    <text evidence="4 5">L-threonine kinase that catalyzes the conversion of L-threonine to L-threonine-O-3-phosphate. Involved in the de novo synthesis of adenosylcobalamin (coenzyme B12) and the assimilation of cobyric acid. Uses ATP; the activity with CTP, GTP or UTP is 6, 11, and 3% of the activity with ATP, respectively.</text>
</comment>
<comment type="function">
    <text evidence="12">The 1,2-propanediol (1,2-PD)-specific bacterial microcompartment (BMC) concentrates low levels of 1,2-PD catabolic enzymes, concentrates volatile reaction intermediates thus enhancing pathway flux and keeps the level of toxic, mutagenic propionaldehyde low. This gene probably benefits from its induction via the Pdu promoter, rather than a physical interaction with the BMC.</text>
</comment>
<comment type="catalytic activity">
    <reaction evidence="4 5">
        <text>L-threonine + ATP = O-phospho-L-threonine + ADP + H(+)</text>
        <dbReference type="Rhea" id="RHEA:33707"/>
        <dbReference type="ChEBI" id="CHEBI:15378"/>
        <dbReference type="ChEBI" id="CHEBI:30616"/>
        <dbReference type="ChEBI" id="CHEBI:57926"/>
        <dbReference type="ChEBI" id="CHEBI:58675"/>
        <dbReference type="ChEBI" id="CHEBI:456216"/>
        <dbReference type="EC" id="2.7.1.177"/>
    </reaction>
</comment>
<comment type="biophysicochemical properties">
    <kinetics>
        <KM evidence="4">54.7 uM for ATP</KM>
        <KM evidence="4">146.1 uM for L-threonine</KM>
        <Vmax evidence="4">62.1 nmol/min/mg enzyme</Vmax>
    </kinetics>
</comment>
<comment type="pathway">
    <text evidence="10">Cofactor biosynthesis; adenosylcobalamin biosynthesis.</text>
</comment>
<comment type="pathway">
    <text evidence="9">Polyol metabolism; 1,2-propanediol degradation.</text>
</comment>
<comment type="subcellular location">
    <subcellularLocation>
        <location evidence="8">Cytoplasm</location>
    </subcellularLocation>
</comment>
<comment type="induction">
    <text evidence="2">The BMC operon and BMC production is induced by growth on 1,2-PD vitamin B12 medium.</text>
</comment>
<comment type="disruption phenotype">
    <text evidence="3 4">Growth is impaired on 1,2-PD minimal medium supplemented with cobyric acid, but is restored on similar medium supplemented with vitamin B12, cobinamide (PubMed:18308727). A double pduW-pduX deletion grows as well as wild-type on 1,2-PD (PubMed:12700259).</text>
</comment>
<comment type="miscellaneous">
    <text evidence="11">Catalysis proceeds by a steady-state ordered bi-bi complex mechanism in which ATP is the first substrate to bind.</text>
</comment>
<comment type="similarity">
    <text evidence="8">Belongs to the GHMP kinase family. PduX subfamily.</text>
</comment>
<proteinExistence type="evidence at protein level"/>
<feature type="chain" id="PRO_0000421736" description="L-threonine kinase">
    <location>
        <begin position="1"/>
        <end position="300"/>
    </location>
</feature>
<feature type="binding site" evidence="1">
    <location>
        <begin position="92"/>
        <end position="102"/>
    </location>
    <ligand>
        <name>ATP</name>
        <dbReference type="ChEBI" id="CHEBI:30616"/>
    </ligand>
</feature>
<feature type="mutagenesis site" description="Impaired helical structure and abolished catalytic activity." evidence="5">
    <original>E</original>
    <variation>A</variation>
    <location>
        <position position="24"/>
    </location>
</feature>
<feature type="mutagenesis site" description="Does not affect catalytic activity." evidence="5">
    <original>E</original>
    <variation>Q</variation>
    <location>
        <position position="24"/>
    </location>
</feature>
<feature type="mutagenesis site" description="Increased KM for ATP." evidence="5">
    <original>S</original>
    <variation>A</variation>
    <location>
        <position position="99"/>
    </location>
</feature>
<feature type="mutagenesis site" description="Abolished catalytic activity." evidence="5">
    <original>S</original>
    <variation>A</variation>
    <location>
        <position position="100"/>
    </location>
</feature>
<feature type="mutagenesis site" description="Does not affect catalytic activity." evidence="5">
    <original>T</original>
    <variation>A</variation>
    <location>
        <position position="101"/>
    </location>
</feature>
<feature type="mutagenesis site" description="Does not affect catalytic activity." evidence="5">
    <original>D</original>
    <variation>A</variation>
    <location>
        <position position="103"/>
    </location>
</feature>
<feature type="mutagenesis site" description="Does not affect catalytic activity." evidence="5">
    <original>D</original>
    <variation>N</variation>
    <location>
        <position position="103"/>
    </location>
</feature>
<feature type="mutagenesis site" description="Increased KM for ATP." evidence="5">
    <original>E</original>
    <variation>A</variation>
    <location>
        <position position="132"/>
    </location>
</feature>
<feature type="mutagenesis site" description="Increased KM for ATP." evidence="5">
    <original>E</original>
    <variation>Q</variation>
    <location>
        <position position="132"/>
    </location>
</feature>
<feature type="mutagenesis site" description="Does not affect catalytic activity." evidence="5">
    <original>T</original>
    <variation>A</variation>
    <location>
        <position position="134"/>
    </location>
</feature>
<feature type="mutagenesis site" description="Impaired helical structure and abolished catalytic activity." evidence="5">
    <original>D</original>
    <variation>A</variation>
    <location>
        <position position="135"/>
    </location>
</feature>
<feature type="mutagenesis site" description="Does not affect catalytic activity." evidence="5">
    <original>D</original>
    <variation>N</variation>
    <location>
        <position position="135"/>
    </location>
</feature>
<feature type="mutagenesis site" description="Increased KM for L-threonine." evidence="5">
    <original>S</original>
    <variation>A</variation>
    <location>
        <position position="253"/>
    </location>
</feature>
<feature type="mutagenesis site" description="Increased KM for L-threonine." evidence="5">
    <original>S</original>
    <variation>A</variation>
    <location>
        <position position="255"/>
    </location>
</feature>
<name>PDUX_SALTY</name>
<organism>
    <name type="scientific">Salmonella typhimurium (strain LT2 / SGSC1412 / ATCC 700720)</name>
    <dbReference type="NCBI Taxonomy" id="99287"/>
    <lineage>
        <taxon>Bacteria</taxon>
        <taxon>Pseudomonadati</taxon>
        <taxon>Pseudomonadota</taxon>
        <taxon>Gammaproteobacteria</taxon>
        <taxon>Enterobacterales</taxon>
        <taxon>Enterobacteriaceae</taxon>
        <taxon>Salmonella</taxon>
    </lineage>
</organism>
<dbReference type="EC" id="2.7.1.177" evidence="4"/>
<dbReference type="EMBL" id="AF026270">
    <property type="protein sequence ID" value="AAD39022.1"/>
    <property type="molecule type" value="Genomic_DNA"/>
</dbReference>
<dbReference type="EMBL" id="AE006468">
    <property type="protein sequence ID" value="AAL20962.1"/>
    <property type="molecule type" value="Genomic_DNA"/>
</dbReference>
<dbReference type="RefSeq" id="NP_461003.1">
    <property type="nucleotide sequence ID" value="NC_003197.2"/>
</dbReference>
<dbReference type="RefSeq" id="WP_001201306.1">
    <property type="nucleotide sequence ID" value="NC_003197.2"/>
</dbReference>
<dbReference type="SMR" id="Q9XDM4"/>
<dbReference type="STRING" id="99287.STM2058"/>
<dbReference type="PaxDb" id="99287-STM2058"/>
<dbReference type="GeneID" id="1253579"/>
<dbReference type="KEGG" id="stm:STM2058"/>
<dbReference type="PATRIC" id="fig|99287.12.peg.2180"/>
<dbReference type="HOGENOM" id="CLU_056896_0_0_6"/>
<dbReference type="OMA" id="DWYSTVE"/>
<dbReference type="PhylomeDB" id="Q9XDM4"/>
<dbReference type="BioCyc" id="MetaCyc:MONOMER-13230"/>
<dbReference type="BioCyc" id="SENT99287:STM2058-MONOMER"/>
<dbReference type="BRENDA" id="2.7.1.177">
    <property type="organism ID" value="2169"/>
</dbReference>
<dbReference type="SABIO-RK" id="Q9XDM4"/>
<dbReference type="UniPathway" id="UPA00148"/>
<dbReference type="UniPathway" id="UPA00621"/>
<dbReference type="Proteomes" id="UP000001014">
    <property type="component" value="Chromosome"/>
</dbReference>
<dbReference type="GO" id="GO:0005737">
    <property type="term" value="C:cytoplasm"/>
    <property type="evidence" value="ECO:0007669"/>
    <property type="project" value="UniProtKB-SubCell"/>
</dbReference>
<dbReference type="GO" id="GO:0005524">
    <property type="term" value="F:ATP binding"/>
    <property type="evidence" value="ECO:0007669"/>
    <property type="project" value="UniProtKB-KW"/>
</dbReference>
<dbReference type="GO" id="GO:0016301">
    <property type="term" value="F:kinase activity"/>
    <property type="evidence" value="ECO:0000314"/>
    <property type="project" value="UniProtKB"/>
</dbReference>
<dbReference type="GO" id="GO:0009236">
    <property type="term" value="P:cobalamin biosynthetic process"/>
    <property type="evidence" value="ECO:0000315"/>
    <property type="project" value="UniProtKB"/>
</dbReference>
<dbReference type="GO" id="GO:0051144">
    <property type="term" value="P:propanediol catabolic process"/>
    <property type="evidence" value="ECO:0007669"/>
    <property type="project" value="UniProtKB-UniPathway"/>
</dbReference>
<dbReference type="FunFam" id="3.30.230.10:FF:000067">
    <property type="entry name" value="Serine/threonine protein kinase"/>
    <property type="match status" value="1"/>
</dbReference>
<dbReference type="Gene3D" id="3.30.230.10">
    <property type="match status" value="1"/>
</dbReference>
<dbReference type="InterPro" id="IPR006204">
    <property type="entry name" value="GHMP_kinase_N_dom"/>
</dbReference>
<dbReference type="InterPro" id="IPR012363">
    <property type="entry name" value="PduX"/>
</dbReference>
<dbReference type="InterPro" id="IPR020568">
    <property type="entry name" value="Ribosomal_Su5_D2-typ_SF"/>
</dbReference>
<dbReference type="InterPro" id="IPR014721">
    <property type="entry name" value="Ribsml_uS5_D2-typ_fold_subgr"/>
</dbReference>
<dbReference type="PANTHER" id="PTHR43527">
    <property type="entry name" value="4-DIPHOSPHOCYTIDYL-2-C-METHYL-D-ERYTHRITOL KINASE, CHLOROPLASTIC"/>
    <property type="match status" value="1"/>
</dbReference>
<dbReference type="PANTHER" id="PTHR43527:SF1">
    <property type="entry name" value="L-THREONINE KINASE"/>
    <property type="match status" value="1"/>
</dbReference>
<dbReference type="Pfam" id="PF00288">
    <property type="entry name" value="GHMP_kinases_N"/>
    <property type="match status" value="1"/>
</dbReference>
<dbReference type="PIRSF" id="PIRSF033887">
    <property type="entry name" value="PduX"/>
    <property type="match status" value="1"/>
</dbReference>
<dbReference type="SUPFAM" id="SSF54211">
    <property type="entry name" value="Ribosomal protein S5 domain 2-like"/>
    <property type="match status" value="1"/>
</dbReference>
<keyword id="KW-0067">ATP-binding</keyword>
<keyword id="KW-0169">Cobalamin biosynthesis</keyword>
<keyword id="KW-0963">Cytoplasm</keyword>
<keyword id="KW-0418">Kinase</keyword>
<keyword id="KW-0547">Nucleotide-binding</keyword>
<keyword id="KW-1185">Reference proteome</keyword>
<keyword id="KW-0808">Transferase</keyword>
<sequence length="300" mass="32787">MRAHYSYLKGDNVAVAQCPASCGELIQGWILGSEKLVSCPVDWYSTVAVTAAPPLINERPLSRAMVERVLAHWQYPAHWSNEIRVDVRSSIPVAKGMASSTADIAATAVATAHHLGHSLDETTLAQLCVSIEPTDSTVFHQLTLFDHNNAATQIACEPPPPIDLLVLESPVTLRTQDYHRLPRQQKLIASSATLQQAWNLVQEACITQNPLRLGEAATLSAIASQTLLPKPGFTALLSLVEECDLYGLNVAHSGSVVGLMLDRKRHDIARLKGKLAEKKLTRHWPKQHLLKMVTGGVKLQ</sequence>
<reference key="1">
    <citation type="journal article" date="1999" name="J. Bacteriol.">
        <title>The propanediol utilization (pdu) operon of Salmonella enterica serovar typhimurium LT2 includes genes necessary for formation of polyhedral organelles involved in coenzyme B(12)-dependent 1, 2-propanediol degradation.</title>
        <authorList>
            <person name="Bobik T.A."/>
            <person name="Havemann G.D."/>
            <person name="Busch R.J."/>
            <person name="Williams D.S."/>
            <person name="Aldrich H.C."/>
        </authorList>
    </citation>
    <scope>NUCLEOTIDE SEQUENCE [GENOMIC DNA]</scope>
    <scope>PATHWAY</scope>
    <scope>INDUCTION</scope>
    <source>
        <strain>LT2 / SGSC1412 / ATCC 700720</strain>
    </source>
</reference>
<reference key="2">
    <citation type="journal article" date="2001" name="Nature">
        <title>Complete genome sequence of Salmonella enterica serovar Typhimurium LT2.</title>
        <authorList>
            <person name="McClelland M."/>
            <person name="Sanderson K.E."/>
            <person name="Spieth J."/>
            <person name="Clifton S.W."/>
            <person name="Latreille P."/>
            <person name="Courtney L."/>
            <person name="Porwollik S."/>
            <person name="Ali J."/>
            <person name="Dante M."/>
            <person name="Du F."/>
            <person name="Hou S."/>
            <person name="Layman D."/>
            <person name="Leonard S."/>
            <person name="Nguyen C."/>
            <person name="Scott K."/>
            <person name="Holmes A."/>
            <person name="Grewal N."/>
            <person name="Mulvaney E."/>
            <person name="Ryan E."/>
            <person name="Sun H."/>
            <person name="Florea L."/>
            <person name="Miller W."/>
            <person name="Stoneking T."/>
            <person name="Nhan M."/>
            <person name="Waterston R."/>
            <person name="Wilson R.K."/>
        </authorList>
    </citation>
    <scope>NUCLEOTIDE SEQUENCE [LARGE SCALE GENOMIC DNA]</scope>
    <source>
        <strain>LT2 / SGSC1412 / ATCC 700720</strain>
    </source>
</reference>
<reference key="3">
    <citation type="journal article" date="2003" name="J. Bacteriol.">
        <title>Propionyl coenzyme A is a common intermediate in the 1,2-propanediol and propionate catabolic pathways needed for expression of the prpBCDE operon during growth of Salmonella enterica on 1,2-propanediol.</title>
        <authorList>
            <person name="Palacios S."/>
            <person name="Starai V.J."/>
            <person name="Escalante-Semerena J.C."/>
        </authorList>
    </citation>
    <scope>DISRUPTION PHENOTYPE</scope>
    <source>
        <strain>LT2</strain>
    </source>
</reference>
<reference key="4">
    <citation type="journal article" date="2008" name="J. Biol. Chem.">
        <title>The PduX enzyme of Salmonella enterica is an L-threonine kinase used for coenzyme B12 synthesis.</title>
        <authorList>
            <person name="Fan C."/>
            <person name="Bobik T.A."/>
        </authorList>
    </citation>
    <scope>FUNCTION</scope>
    <scope>CATALYTIC ACTIVITY</scope>
    <scope>PATHWAY</scope>
    <scope>BIOPHYSICOCHEMICAL PROPERTIES</scope>
    <scope>DISRUPTION PHENOTYPE</scope>
    <source>
        <strain>LT2 / SGSC1412 / ATCC 700720</strain>
    </source>
</reference>
<reference key="5">
    <citation type="journal article" date="2009" name="J. Biol. Chem.">
        <title>Kinetic and functional analysis of L-threonine kinase, the PduX enzyme of Salmonella enterica.</title>
        <authorList>
            <person name="Fan C."/>
            <person name="Fromm H.J."/>
            <person name="Bobik T.A."/>
        </authorList>
    </citation>
    <scope>FUNCTION</scope>
    <scope>CATALYTIC ACTIVITY</scope>
    <scope>REACTION MECHANISM</scope>
    <scope>MUTAGENESIS OF GLU-24; SER-99; SER-100; THR-101; ASP-103; GLU-132; THR-134; ASP-135; SER-253 AND SER-255</scope>
    <source>
        <strain>LT2 / SGSC1412 / ATCC 700720</strain>
    </source>
</reference>
<reference key="6">
    <citation type="journal article" date="2017" name="PLoS Comput. Biol.">
        <title>A systems-level model reveals that 1,2-Propanediol utilization microcompartments enhance pathway flux through intermediate sequestration.</title>
        <authorList>
            <person name="Jakobson C.M."/>
            <person name="Tullman-Ercek D."/>
            <person name="Slininger M.F."/>
            <person name="Mangan N.M."/>
        </authorList>
    </citation>
    <scope>SYSTEM-MODELING</scope>
    <scope>FUNCTION</scope>
    <source>
        <strain>LT2</strain>
    </source>
</reference>